<sequence>MRVAVAGCCHGELDKIYETLALAERRGPGPVDLLLCCGDFQAVRNEADLRCMAVPPKYRHMQTFYRYYSGEKKAPVLTLFIGGNHEASNHLQELPYGGWVAPNIYYLGLAGVVKYRGVRIGGISGIFKSHDYRKGHFECPPYNSSTIRSIYHVRNIEVYKLKQLKQPIDIFLSHDWPRSIYHYGNKKQLLKTKSFFRQEVENNTLGSPAASELLEHLKPTYWFSAHLHVKFAALMQHQAKDKGQTARATKFLALDKCLPHRDFLQILEIEHDPSAPDYLEYDIEWLTILRATDDLINVTGRLWNMPENNGLHARWDYSATEEGMKEVLEKLNHDLKVPCNFSVTAACYDPSKPQTQMQLIHRINPQTTEFCAQLGIIDINVRLQKSKEEHHVCGEYEEQDDVESNDSGEDQSEYNTDTSALSSINPDEIMLDEEEDEDSIVSAHSGMNTPSVEPSDQASEFSASFSDVRILPGSMIVSSDDTVDSTIDREGKPGGTVESGNGEDLTKVPLKRLSDEHEPEQRKKIKRRNQAIYAAVDDDDDDAA</sequence>
<reference key="1">
    <citation type="journal article" date="2000" name="Nucleic Acids Res.">
        <title>Human RNA lariat debranching enzyme cDNA complements the phenotypes of Saccharomyces cerevisiae dbr1 and Schizosaccharomyces pombe dbr1 mutants.</title>
        <authorList>
            <person name="Kim J.-W."/>
            <person name="Kim H.-C."/>
            <person name="Kim G.-M."/>
            <person name="Yang J.-M."/>
            <person name="Boeke J.D."/>
            <person name="Nam K."/>
        </authorList>
    </citation>
    <scope>NUCLEOTIDE SEQUENCE [MRNA] (ISOFORM 1)</scope>
    <scope>FUNCTION</scope>
</reference>
<reference key="2">
    <citation type="journal article" date="2004" name="Nat. Genet.">
        <title>Complete sequencing and characterization of 21,243 full-length human cDNAs.</title>
        <authorList>
            <person name="Ota T."/>
            <person name="Suzuki Y."/>
            <person name="Nishikawa T."/>
            <person name="Otsuki T."/>
            <person name="Sugiyama T."/>
            <person name="Irie R."/>
            <person name="Wakamatsu A."/>
            <person name="Hayashi K."/>
            <person name="Sato H."/>
            <person name="Nagai K."/>
            <person name="Kimura K."/>
            <person name="Makita H."/>
            <person name="Sekine M."/>
            <person name="Obayashi M."/>
            <person name="Nishi T."/>
            <person name="Shibahara T."/>
            <person name="Tanaka T."/>
            <person name="Ishii S."/>
            <person name="Yamamoto J."/>
            <person name="Saito K."/>
            <person name="Kawai Y."/>
            <person name="Isono Y."/>
            <person name="Nakamura Y."/>
            <person name="Nagahari K."/>
            <person name="Murakami K."/>
            <person name="Yasuda T."/>
            <person name="Iwayanagi T."/>
            <person name="Wagatsuma M."/>
            <person name="Shiratori A."/>
            <person name="Sudo H."/>
            <person name="Hosoiri T."/>
            <person name="Kaku Y."/>
            <person name="Kodaira H."/>
            <person name="Kondo H."/>
            <person name="Sugawara M."/>
            <person name="Takahashi M."/>
            <person name="Kanda K."/>
            <person name="Yokoi T."/>
            <person name="Furuya T."/>
            <person name="Kikkawa E."/>
            <person name="Omura Y."/>
            <person name="Abe K."/>
            <person name="Kamihara K."/>
            <person name="Katsuta N."/>
            <person name="Sato K."/>
            <person name="Tanikawa M."/>
            <person name="Yamazaki M."/>
            <person name="Ninomiya K."/>
            <person name="Ishibashi T."/>
            <person name="Yamashita H."/>
            <person name="Murakawa K."/>
            <person name="Fujimori K."/>
            <person name="Tanai H."/>
            <person name="Kimata M."/>
            <person name="Watanabe M."/>
            <person name="Hiraoka S."/>
            <person name="Chiba Y."/>
            <person name="Ishida S."/>
            <person name="Ono Y."/>
            <person name="Takiguchi S."/>
            <person name="Watanabe S."/>
            <person name="Yosida M."/>
            <person name="Hotuta T."/>
            <person name="Kusano J."/>
            <person name="Kanehori K."/>
            <person name="Takahashi-Fujii A."/>
            <person name="Hara H."/>
            <person name="Tanase T.-O."/>
            <person name="Nomura Y."/>
            <person name="Togiya S."/>
            <person name="Komai F."/>
            <person name="Hara R."/>
            <person name="Takeuchi K."/>
            <person name="Arita M."/>
            <person name="Imose N."/>
            <person name="Musashino K."/>
            <person name="Yuuki H."/>
            <person name="Oshima A."/>
            <person name="Sasaki N."/>
            <person name="Aotsuka S."/>
            <person name="Yoshikawa Y."/>
            <person name="Matsunawa H."/>
            <person name="Ichihara T."/>
            <person name="Shiohata N."/>
            <person name="Sano S."/>
            <person name="Moriya S."/>
            <person name="Momiyama H."/>
            <person name="Satoh N."/>
            <person name="Takami S."/>
            <person name="Terashima Y."/>
            <person name="Suzuki O."/>
            <person name="Nakagawa S."/>
            <person name="Senoh A."/>
            <person name="Mizoguchi H."/>
            <person name="Goto Y."/>
            <person name="Shimizu F."/>
            <person name="Wakebe H."/>
            <person name="Hishigaki H."/>
            <person name="Watanabe T."/>
            <person name="Sugiyama A."/>
            <person name="Takemoto M."/>
            <person name="Kawakami B."/>
            <person name="Yamazaki M."/>
            <person name="Watanabe K."/>
            <person name="Kumagai A."/>
            <person name="Itakura S."/>
            <person name="Fukuzumi Y."/>
            <person name="Fujimori Y."/>
            <person name="Komiyama M."/>
            <person name="Tashiro H."/>
            <person name="Tanigami A."/>
            <person name="Fujiwara T."/>
            <person name="Ono T."/>
            <person name="Yamada K."/>
            <person name="Fujii Y."/>
            <person name="Ozaki K."/>
            <person name="Hirao M."/>
            <person name="Ohmori Y."/>
            <person name="Kawabata A."/>
            <person name="Hikiji T."/>
            <person name="Kobatake N."/>
            <person name="Inagaki H."/>
            <person name="Ikema Y."/>
            <person name="Okamoto S."/>
            <person name="Okitani R."/>
            <person name="Kawakami T."/>
            <person name="Noguchi S."/>
            <person name="Itoh T."/>
            <person name="Shigeta K."/>
            <person name="Senba T."/>
            <person name="Matsumura K."/>
            <person name="Nakajima Y."/>
            <person name="Mizuno T."/>
            <person name="Morinaga M."/>
            <person name="Sasaki M."/>
            <person name="Togashi T."/>
            <person name="Oyama M."/>
            <person name="Hata H."/>
            <person name="Watanabe M."/>
            <person name="Komatsu T."/>
            <person name="Mizushima-Sugano J."/>
            <person name="Satoh T."/>
            <person name="Shirai Y."/>
            <person name="Takahashi Y."/>
            <person name="Nakagawa K."/>
            <person name="Okumura K."/>
            <person name="Nagase T."/>
            <person name="Nomura N."/>
            <person name="Kikuchi H."/>
            <person name="Masuho Y."/>
            <person name="Yamashita R."/>
            <person name="Nakai K."/>
            <person name="Yada T."/>
            <person name="Nakamura Y."/>
            <person name="Ohara O."/>
            <person name="Isogai T."/>
            <person name="Sugano S."/>
        </authorList>
    </citation>
    <scope>NUCLEOTIDE SEQUENCE [LARGE SCALE MRNA] (ISOFORM 2)</scope>
    <source>
        <tissue>Colon</tissue>
    </source>
</reference>
<reference key="3">
    <citation type="journal article" date="2004" name="Genome Res.">
        <title>The status, quality, and expansion of the NIH full-length cDNA project: the Mammalian Gene Collection (MGC).</title>
        <authorList>
            <consortium name="The MGC Project Team"/>
        </authorList>
    </citation>
    <scope>NUCLEOTIDE SEQUENCE [LARGE SCALE MRNA] (ISOFORM 1)</scope>
    <source>
        <tissue>Brain</tissue>
    </source>
</reference>
<reference key="4">
    <citation type="journal article" date="1987" name="J. Biol. Chem.">
        <title>Purification of a RNA debranching activity from HeLa cells.</title>
        <authorList>
            <person name="Arenas J."/>
            <person name="Hurwitz J."/>
        </authorList>
    </citation>
    <scope>FUNCTION</scope>
    <scope>CATALYTIC ACTIVITY</scope>
    <scope>COFACTOR</scope>
    <scope>BIOPHYSICOCHEMICAL PROPERTIES</scope>
</reference>
<reference key="5">
    <citation type="journal article" date="2005" name="Retrovirology">
        <title>DBR1 siRNA inhibition of HIV-1 replication.</title>
        <authorList>
            <person name="Ye Y."/>
            <person name="De Leon J."/>
            <person name="Yokoyama N."/>
            <person name="Naidu Y."/>
            <person name="Camerini D."/>
        </authorList>
    </citation>
    <scope>FUNCTION</scope>
</reference>
<reference key="6">
    <citation type="journal article" date="2006" name="Cell">
        <title>Global, in vivo, and site-specific phosphorylation dynamics in signaling networks.</title>
        <authorList>
            <person name="Olsen J.V."/>
            <person name="Blagoev B."/>
            <person name="Gnad F."/>
            <person name="Macek B."/>
            <person name="Kumar C."/>
            <person name="Mortensen P."/>
            <person name="Mann M."/>
        </authorList>
    </citation>
    <scope>PHOSPHORYLATION [LARGE SCALE ANALYSIS] AT SER-514</scope>
    <scope>IDENTIFICATION BY MASS SPECTROMETRY [LARGE SCALE ANALYSIS]</scope>
    <source>
        <tissue>Cervix carcinoma</tissue>
    </source>
</reference>
<reference key="7">
    <citation type="journal article" date="2008" name="Proc. Natl. Acad. Sci. U.S.A.">
        <title>A quantitative atlas of mitotic phosphorylation.</title>
        <authorList>
            <person name="Dephoure N."/>
            <person name="Zhou C."/>
            <person name="Villen J."/>
            <person name="Beausoleil S.A."/>
            <person name="Bakalarski C.E."/>
            <person name="Elledge S.J."/>
            <person name="Gygi S.P."/>
        </authorList>
    </citation>
    <scope>PHOSPHORYLATION [LARGE SCALE ANALYSIS] AT SER-474; SER-478 AND SER-479</scope>
    <scope>IDENTIFICATION BY MASS SPECTROMETRY [LARGE SCALE ANALYSIS]</scope>
    <source>
        <tissue>Cervix carcinoma</tissue>
    </source>
</reference>
<reference key="8">
    <citation type="journal article" date="2009" name="Science">
        <title>Lysine acetylation targets protein complexes and co-regulates major cellular functions.</title>
        <authorList>
            <person name="Choudhary C."/>
            <person name="Kumar C."/>
            <person name="Gnad F."/>
            <person name="Nielsen M.L."/>
            <person name="Rehman M."/>
            <person name="Walther T.C."/>
            <person name="Olsen J.V."/>
            <person name="Mann M."/>
        </authorList>
    </citation>
    <scope>ACETYLATION [LARGE SCALE ANALYSIS] AT LYS-128</scope>
    <scope>IDENTIFICATION BY MASS SPECTROMETRY [LARGE SCALE ANALYSIS]</scope>
</reference>
<reference key="9">
    <citation type="journal article" date="2010" name="Sci. Signal.">
        <title>Quantitative phosphoproteomics reveals widespread full phosphorylation site occupancy during mitosis.</title>
        <authorList>
            <person name="Olsen J.V."/>
            <person name="Vermeulen M."/>
            <person name="Santamaria A."/>
            <person name="Kumar C."/>
            <person name="Miller M.L."/>
            <person name="Jensen L.J."/>
            <person name="Gnad F."/>
            <person name="Cox J."/>
            <person name="Jensen T.S."/>
            <person name="Nigg E.A."/>
            <person name="Brunak S."/>
            <person name="Mann M."/>
        </authorList>
    </citation>
    <scope>PHOSPHORYLATION [LARGE SCALE ANALYSIS] AT SER-514</scope>
    <scope>IDENTIFICATION BY MASS SPECTROMETRY [LARGE SCALE ANALYSIS]</scope>
    <source>
        <tissue>Cervix carcinoma</tissue>
    </source>
</reference>
<reference key="10">
    <citation type="journal article" date="2011" name="BMC Syst. Biol.">
        <title>Initial characterization of the human central proteome.</title>
        <authorList>
            <person name="Burkard T.R."/>
            <person name="Planyavsky M."/>
            <person name="Kaupe I."/>
            <person name="Breitwieser F.P."/>
            <person name="Buerckstuemmer T."/>
            <person name="Bennett K.L."/>
            <person name="Superti-Furga G."/>
            <person name="Colinge J."/>
        </authorList>
    </citation>
    <scope>IDENTIFICATION BY MASS SPECTROMETRY [LARGE SCALE ANALYSIS]</scope>
</reference>
<reference key="11">
    <citation type="journal article" date="2011" name="Sci. Signal.">
        <title>System-wide temporal characterization of the proteome and phosphoproteome of human embryonic stem cell differentiation.</title>
        <authorList>
            <person name="Rigbolt K.T."/>
            <person name="Prokhorova T.A."/>
            <person name="Akimov V."/>
            <person name="Henningsen J."/>
            <person name="Johansen P.T."/>
            <person name="Kratchmarova I."/>
            <person name="Kassem M."/>
            <person name="Mann M."/>
            <person name="Olsen J.V."/>
            <person name="Blagoev B."/>
        </authorList>
    </citation>
    <scope>PHOSPHORYLATION [LARGE SCALE ANALYSIS] AT SER-514</scope>
    <scope>IDENTIFICATION BY MASS SPECTROMETRY [LARGE SCALE ANALYSIS]</scope>
</reference>
<reference key="12">
    <citation type="journal article" date="2013" name="J. Proteome Res.">
        <title>Toward a comprehensive characterization of a human cancer cell phosphoproteome.</title>
        <authorList>
            <person name="Zhou H."/>
            <person name="Di Palma S."/>
            <person name="Preisinger C."/>
            <person name="Peng M."/>
            <person name="Polat A.N."/>
            <person name="Heck A.J."/>
            <person name="Mohammed S."/>
        </authorList>
    </citation>
    <scope>PHOSPHORYLATION [LARGE SCALE ANALYSIS] AT SER-514</scope>
    <scope>IDENTIFICATION BY MASS SPECTROMETRY [LARGE SCALE ANALYSIS]</scope>
    <source>
        <tissue>Cervix carcinoma</tissue>
    </source>
</reference>
<reference key="13">
    <citation type="journal article" date="2014" name="J. Proteomics">
        <title>An enzyme assisted RP-RPLC approach for in-depth analysis of human liver phosphoproteome.</title>
        <authorList>
            <person name="Bian Y."/>
            <person name="Song C."/>
            <person name="Cheng K."/>
            <person name="Dong M."/>
            <person name="Wang F."/>
            <person name="Huang J."/>
            <person name="Sun D."/>
            <person name="Wang L."/>
            <person name="Ye M."/>
            <person name="Zou H."/>
        </authorList>
    </citation>
    <scope>PHOSPHORYLATION [LARGE SCALE ANALYSIS] AT SER-464</scope>
    <scope>IDENTIFICATION BY MASS SPECTROMETRY [LARGE SCALE ANALYSIS]</scope>
    <source>
        <tissue>Liver</tissue>
    </source>
</reference>
<reference key="14">
    <citation type="journal article" date="2018" name="Cell">
        <title>Inborn Errors of RNA Lariat Metabolism in Humans with Brainstem Viral Infection.</title>
        <authorList>
            <person name="Zhang S.Y."/>
            <person name="Clark N.E."/>
            <person name="Freije C.A."/>
            <person name="Pauwels E."/>
            <person name="Taggart A.J."/>
            <person name="Okada S."/>
            <person name="Mandel H."/>
            <person name="Garcia P."/>
            <person name="Ciancanelli M.J."/>
            <person name="Biran A."/>
            <person name="Lafaille F.G."/>
            <person name="Tsumura M."/>
            <person name="Cobat A."/>
            <person name="Luo J."/>
            <person name="Volpi S."/>
            <person name="Zimmer B."/>
            <person name="Sakata S."/>
            <person name="Dinis A."/>
            <person name="Ohara O."/>
            <person name="Garcia Reino E.J."/>
            <person name="Dobbs K."/>
            <person name="Hasek M."/>
            <person name="Holloway S.P."/>
            <person name="McCammon K."/>
            <person name="Hussong S.A."/>
            <person name="DeRosa N."/>
            <person name="Van Skike C.E."/>
            <person name="Katolik A."/>
            <person name="Lorenzo L."/>
            <person name="Hyodo M."/>
            <person name="Faria E."/>
            <person name="Halwani R."/>
            <person name="Fukuhara R."/>
            <person name="Smith G.A."/>
            <person name="Galvan V."/>
            <person name="Damha M.J."/>
            <person name="Al-Muhsen S."/>
            <person name="Itan Y."/>
            <person name="Boeke J.D."/>
            <person name="Notarangelo L.D."/>
            <person name="Studer L."/>
            <person name="Kobayashi M."/>
            <person name="Diogo L."/>
            <person name="Fairbrother W.G."/>
            <person name="Abel L."/>
            <person name="Rosenberg B.R."/>
            <person name="Hart P.J."/>
            <person name="Etzioni A."/>
            <person name="Casanova J.L."/>
        </authorList>
    </citation>
    <scope>INVOLVEMENT IN IIAE11</scope>
    <scope>VARIANTS IIAE11 GLY-13; HIS-17; THR-120 AND 197-ARG--ALA-544 DEL</scope>
    <scope>CHARACTERIZATION OF VARIANTS IIAE11 GLY-13; HIS-17; THR-120 AND 197-ARG--ALA-544 DEL</scope>
    <scope>FUNCTION</scope>
    <scope>TISSUE SPECIFICITY</scope>
    <scope>MUTAGENESIS OF HIS-85</scope>
</reference>
<reference key="15">
    <citation type="journal article" date="2023" name="Hum. Genet.">
        <title>A founder DBR1 variant causes a lethal form of congenital ichthyosis.</title>
        <authorList>
            <person name="Shamseldin H.E."/>
            <person name="Sadagopan M."/>
            <person name="Martini J."/>
            <person name="Al-Ali R."/>
            <person name="Radefeldt M."/>
            <person name="Ataei M."/>
            <person name="Lemke S."/>
            <person name="Rahbeeni Z."/>
            <person name="Al Mutairi F."/>
            <person name="Ababneh F."/>
            <person name="Alrukban H.A."/>
            <person name="Abdulwahab F."/>
            <person name="Alhajj S.M."/>
            <person name="Bauer P."/>
            <person name="Bertoli-Avella A."/>
            <person name="Alkuraya F.S."/>
        </authorList>
    </citation>
    <scope>VARIANT XGIP CYS-67</scope>
    <scope>CHARACTERIZATION OF VARIANT XGIP CYS-67</scope>
</reference>
<name>DBR1_HUMAN</name>
<gene>
    <name type="primary">DBR1</name>
</gene>
<organism>
    <name type="scientific">Homo sapiens</name>
    <name type="common">Human</name>
    <dbReference type="NCBI Taxonomy" id="9606"/>
    <lineage>
        <taxon>Eukaryota</taxon>
        <taxon>Metazoa</taxon>
        <taxon>Chordata</taxon>
        <taxon>Craniata</taxon>
        <taxon>Vertebrata</taxon>
        <taxon>Euteleostomi</taxon>
        <taxon>Mammalia</taxon>
        <taxon>Eutheria</taxon>
        <taxon>Euarchontoglires</taxon>
        <taxon>Primates</taxon>
        <taxon>Haplorrhini</taxon>
        <taxon>Catarrhini</taxon>
        <taxon>Hominidae</taxon>
        <taxon>Homo</taxon>
    </lineage>
</organism>
<protein>
    <recommendedName>
        <fullName>Lariat debranching enzyme</fullName>
        <ecNumber evidence="7">3.1.4.-</ecNumber>
    </recommendedName>
</protein>
<accession>Q9UK59</accession>
<accession>Q96GH0</accession>
<accession>Q9NXQ6</accession>
<keyword id="KW-0007">Acetylation</keyword>
<keyword id="KW-0025">Alternative splicing</keyword>
<keyword id="KW-0225">Disease variant</keyword>
<keyword id="KW-0378">Hydrolase</keyword>
<keyword id="KW-0977">Ichthyosis</keyword>
<keyword id="KW-0408">Iron</keyword>
<keyword id="KW-0464">Manganese</keyword>
<keyword id="KW-0479">Metal-binding</keyword>
<keyword id="KW-0507">mRNA processing</keyword>
<keyword id="KW-0539">Nucleus</keyword>
<keyword id="KW-0597">Phosphoprotein</keyword>
<keyword id="KW-1267">Proteomics identification</keyword>
<keyword id="KW-1185">Reference proteome</keyword>
<keyword id="KW-0862">Zinc</keyword>
<dbReference type="EC" id="3.1.4.-" evidence="7"/>
<dbReference type="EMBL" id="AF180919">
    <property type="protein sequence ID" value="AAD53327.2"/>
    <property type="status" value="ALT_FRAME"/>
    <property type="molecule type" value="mRNA"/>
</dbReference>
<dbReference type="EMBL" id="AK000116">
    <property type="protein sequence ID" value="BAA90954.1"/>
    <property type="molecule type" value="mRNA"/>
</dbReference>
<dbReference type="EMBL" id="BC009472">
    <property type="protein sequence ID" value="AAH09472.1"/>
    <property type="molecule type" value="mRNA"/>
</dbReference>
<dbReference type="CCDS" id="CCDS33863.1">
    <molecule id="Q9UK59-1"/>
</dbReference>
<dbReference type="RefSeq" id="NP_057300.2">
    <molecule id="Q9UK59-1"/>
    <property type="nucleotide sequence ID" value="NM_016216.4"/>
</dbReference>
<dbReference type="SMR" id="Q9UK59"/>
<dbReference type="BioGRID" id="119344">
    <property type="interactions" value="39"/>
</dbReference>
<dbReference type="FunCoup" id="Q9UK59">
    <property type="interactions" value="2904"/>
</dbReference>
<dbReference type="IntAct" id="Q9UK59">
    <property type="interactions" value="17"/>
</dbReference>
<dbReference type="STRING" id="9606.ENSP00000260803"/>
<dbReference type="GlyGen" id="Q9UK59">
    <property type="glycosylation" value="1 site, 1 O-linked glycan (1 site)"/>
</dbReference>
<dbReference type="iPTMnet" id="Q9UK59"/>
<dbReference type="PhosphoSitePlus" id="Q9UK59"/>
<dbReference type="BioMuta" id="DBR1"/>
<dbReference type="DMDM" id="115311701"/>
<dbReference type="jPOST" id="Q9UK59"/>
<dbReference type="MassIVE" id="Q9UK59"/>
<dbReference type="PaxDb" id="9606-ENSP00000260803"/>
<dbReference type="PeptideAtlas" id="Q9UK59"/>
<dbReference type="ProteomicsDB" id="84727">
    <molecule id="Q9UK59-1"/>
</dbReference>
<dbReference type="ProteomicsDB" id="84728">
    <molecule id="Q9UK59-2"/>
</dbReference>
<dbReference type="Pumba" id="Q9UK59"/>
<dbReference type="Antibodypedia" id="33423">
    <property type="antibodies" value="157 antibodies from 19 providers"/>
</dbReference>
<dbReference type="DNASU" id="51163"/>
<dbReference type="Ensembl" id="ENST00000260803.9">
    <molecule id="Q9UK59-1"/>
    <property type="protein sequence ID" value="ENSP00000260803.4"/>
    <property type="gene ID" value="ENSG00000138231.14"/>
</dbReference>
<dbReference type="GeneID" id="51163"/>
<dbReference type="KEGG" id="hsa:51163"/>
<dbReference type="MANE-Select" id="ENST00000260803.9">
    <property type="protein sequence ID" value="ENSP00000260803.4"/>
    <property type="RefSeq nucleotide sequence ID" value="NM_016216.4"/>
    <property type="RefSeq protein sequence ID" value="NP_057300.2"/>
</dbReference>
<dbReference type="UCSC" id="uc003erv.4">
    <molecule id="Q9UK59-1"/>
    <property type="organism name" value="human"/>
</dbReference>
<dbReference type="AGR" id="HGNC:15594"/>
<dbReference type="CTD" id="51163"/>
<dbReference type="DisGeNET" id="51163"/>
<dbReference type="GeneCards" id="DBR1"/>
<dbReference type="HGNC" id="HGNC:15594">
    <property type="gene designation" value="DBR1"/>
</dbReference>
<dbReference type="HPA" id="ENSG00000138231">
    <property type="expression patterns" value="Low tissue specificity"/>
</dbReference>
<dbReference type="MalaCards" id="DBR1"/>
<dbReference type="MIM" id="607024">
    <property type="type" value="gene"/>
</dbReference>
<dbReference type="MIM" id="619441">
    <property type="type" value="phenotype"/>
</dbReference>
<dbReference type="MIM" id="620510">
    <property type="type" value="phenotype"/>
</dbReference>
<dbReference type="neXtProt" id="NX_Q9UK59"/>
<dbReference type="OpenTargets" id="ENSG00000138231"/>
<dbReference type="PharmGKB" id="PA27166"/>
<dbReference type="VEuPathDB" id="HostDB:ENSG00000138231"/>
<dbReference type="eggNOG" id="KOG2863">
    <property type="taxonomic scope" value="Eukaryota"/>
</dbReference>
<dbReference type="GeneTree" id="ENSGT00510000047481"/>
<dbReference type="HOGENOM" id="CLU_005893_0_2_1"/>
<dbReference type="InParanoid" id="Q9UK59"/>
<dbReference type="OMA" id="GIDDPLC"/>
<dbReference type="OrthoDB" id="407609at2759"/>
<dbReference type="PAN-GO" id="Q9UK59">
    <property type="GO annotations" value="3 GO annotations based on evolutionary models"/>
</dbReference>
<dbReference type="PhylomeDB" id="Q9UK59"/>
<dbReference type="TreeFam" id="TF313221"/>
<dbReference type="PathwayCommons" id="Q9UK59"/>
<dbReference type="SignaLink" id="Q9UK59"/>
<dbReference type="BioGRID-ORCS" id="51163">
    <property type="hits" value="835 hits in 1154 CRISPR screens"/>
</dbReference>
<dbReference type="GeneWiki" id="DBR1"/>
<dbReference type="GenomeRNAi" id="51163"/>
<dbReference type="Pharos" id="Q9UK59">
    <property type="development level" value="Tbio"/>
</dbReference>
<dbReference type="PRO" id="PR:Q9UK59"/>
<dbReference type="Proteomes" id="UP000005640">
    <property type="component" value="Chromosome 3"/>
</dbReference>
<dbReference type="RNAct" id="Q9UK59">
    <property type="molecule type" value="protein"/>
</dbReference>
<dbReference type="Bgee" id="ENSG00000138231">
    <property type="expression patterns" value="Expressed in buccal mucosa cell and 174 other cell types or tissues"/>
</dbReference>
<dbReference type="ExpressionAtlas" id="Q9UK59">
    <property type="expression patterns" value="baseline and differential"/>
</dbReference>
<dbReference type="GO" id="GO:0005654">
    <property type="term" value="C:nucleoplasm"/>
    <property type="evidence" value="ECO:0000314"/>
    <property type="project" value="HPA"/>
</dbReference>
<dbReference type="GO" id="GO:0005634">
    <property type="term" value="C:nucleus"/>
    <property type="evidence" value="ECO:0000314"/>
    <property type="project" value="UniProtKB"/>
</dbReference>
<dbReference type="GO" id="GO:0046872">
    <property type="term" value="F:metal ion binding"/>
    <property type="evidence" value="ECO:0007669"/>
    <property type="project" value="UniProtKB-KW"/>
</dbReference>
<dbReference type="GO" id="GO:0003723">
    <property type="term" value="F:RNA binding"/>
    <property type="evidence" value="ECO:0007005"/>
    <property type="project" value="UniProtKB"/>
</dbReference>
<dbReference type="GO" id="GO:0008419">
    <property type="term" value="F:RNA lariat debranching enzyme activity"/>
    <property type="evidence" value="ECO:0000315"/>
    <property type="project" value="UniProtKB"/>
</dbReference>
<dbReference type="GO" id="GO:0000398">
    <property type="term" value="P:mRNA splicing, via spliceosome"/>
    <property type="evidence" value="ECO:0000318"/>
    <property type="project" value="GO_Central"/>
</dbReference>
<dbReference type="GO" id="GO:0000292">
    <property type="term" value="P:RNA fragment catabolic process"/>
    <property type="evidence" value="ECO:0000315"/>
    <property type="project" value="UniProtKB"/>
</dbReference>
<dbReference type="GO" id="GO:0000375">
    <property type="term" value="P:RNA splicing, via transesterification reactions"/>
    <property type="evidence" value="ECO:0000315"/>
    <property type="project" value="UniProtKB"/>
</dbReference>
<dbReference type="CDD" id="cd00844">
    <property type="entry name" value="MPP_Dbr1_N"/>
    <property type="match status" value="1"/>
</dbReference>
<dbReference type="FunFam" id="3.60.21.10:FF:000035">
    <property type="entry name" value="Lariat debranching enzyme"/>
    <property type="match status" value="1"/>
</dbReference>
<dbReference type="InterPro" id="IPR004843">
    <property type="entry name" value="Calcineurin-like_PHP_ApaH"/>
</dbReference>
<dbReference type="InterPro" id="IPR007708">
    <property type="entry name" value="DBR1_C"/>
</dbReference>
<dbReference type="InterPro" id="IPR041816">
    <property type="entry name" value="Dbr1_N"/>
</dbReference>
<dbReference type="InterPro" id="IPR029052">
    <property type="entry name" value="Metallo-depent_PP-like"/>
</dbReference>
<dbReference type="PANTHER" id="PTHR12849:SF0">
    <property type="entry name" value="LARIAT DEBRANCHING ENZYME"/>
    <property type="match status" value="1"/>
</dbReference>
<dbReference type="PANTHER" id="PTHR12849">
    <property type="entry name" value="RNA LARIAT DEBRANCHING ENZYME"/>
    <property type="match status" value="1"/>
</dbReference>
<dbReference type="Pfam" id="PF05011">
    <property type="entry name" value="DBR1"/>
    <property type="match status" value="1"/>
</dbReference>
<dbReference type="Pfam" id="PF00149">
    <property type="entry name" value="Metallophos"/>
    <property type="match status" value="1"/>
</dbReference>
<dbReference type="SMART" id="SM01124">
    <property type="entry name" value="DBR1"/>
    <property type="match status" value="1"/>
</dbReference>
<dbReference type="SUPFAM" id="SSF56300">
    <property type="entry name" value="Metallo-dependent phosphatases"/>
    <property type="match status" value="1"/>
</dbReference>
<comment type="function">
    <text evidence="5 6 7 8">Cleaves the 2'-5' phosphodiester linkage at the branch point of excised lariat intron RNA and converts them into linear molecules that can be subsequently degraded, thereby facilitating ribonucleotide turnover (PubMed:10982890, PubMed:16232320, PubMed:2435736). Linked to its role in pre-mRNA processing mechanism, may also participate in retrovirus replication via an RNA lariat intermediate in cDNA synthesis and have an antiviral cell-intrinsic defense function in the brainstem (PubMed:16232320, PubMed:29474921).</text>
</comment>
<comment type="cofactor">
    <cofactor evidence="2">
        <name>Fe(2+)</name>
        <dbReference type="ChEBI" id="CHEBI:29033"/>
    </cofactor>
    <cofactor evidence="2">
        <name>Zn(2+)</name>
        <dbReference type="ChEBI" id="CHEBI:29105"/>
    </cofactor>
    <cofactor evidence="7">
        <name>Mn(2+)</name>
        <dbReference type="ChEBI" id="CHEBI:29035"/>
    </cofactor>
    <text evidence="2">Binds 2 divalent metal cations per subunit.</text>
</comment>
<comment type="activity regulation">
    <text evidence="2 7">Active in presence of diverse metals including Fe(2+), Zn(2+), Mn(2+) (By similarity). Also activated by Ca(2+) (PubMed:2435736). Binds two metal cations in two adjacent alpha and beta metal-binding pockets (By similarity).</text>
</comment>
<comment type="biophysicochemical properties">
    <phDependence>
        <text evidence="7">Optimum pH is 7.0.</text>
    </phDependence>
</comment>
<comment type="subcellular location">
    <subcellularLocation>
        <location evidence="11">Nucleus</location>
    </subcellularLocation>
</comment>
<comment type="alternative products">
    <event type="alternative splicing"/>
    <isoform>
        <id>Q9UK59-1</id>
        <name>1</name>
        <sequence type="displayed"/>
    </isoform>
    <isoform>
        <id>Q9UK59-2</id>
        <name>2</name>
        <sequence type="described" ref="VSP_020631 VSP_020632"/>
    </isoform>
</comment>
<comment type="tissue specificity">
    <text evidence="8">Ubiquitously expressed, strongest expression in the spinal cord and brainstem.</text>
</comment>
<comment type="disease" evidence="8">
    <disease id="DI-06170">
        <name>Encephalitis, acute, infection (viral)-induced, 11</name>
        <acronym>IIAE11</acronym>
        <description>An autosomal recessive disorder characterized by increased susceptibility to viral encephalitis affecting the brainstem and induced by neurotropic viruses, such as herpes simplex virus-1, influenza B virus or norovirus.</description>
        <dbReference type="MIM" id="619441"/>
    </disease>
    <text>Disease susceptibility is associated with variants affecting the gene represented in this entry.</text>
</comment>
<comment type="disease" evidence="9">
    <disease id="DI-06762">
        <name>Xerosis and growth failure with immune and pulmonary dysfunction syndrome</name>
        <acronym>XGIP</acronym>
        <description>An autosomal recessive disorder characterized by premature birth, severe intrauterine growth deficiency, congenital ichthyosis-like features such as collodion membrane, severe skin peeling and xerosis, and death before the first year of life. Patients also exhibit bronchopulmonary disease, thrombocytopenia, and neutropenia. Additional variable features include cardiac anomalies, seizures, encephalopathy, cholestasis, and cataract.</description>
        <dbReference type="MIM" id="620510"/>
    </disease>
    <text>The disease is caused by variants affecting the gene represented in this entry.</text>
</comment>
<comment type="similarity">
    <text evidence="11">Belongs to the lariat debranching enzyme family.</text>
</comment>
<comment type="sequence caution" evidence="11">
    <conflict type="frameshift">
        <sequence resource="EMBL-CDS" id="AAD53327"/>
    </conflict>
</comment>
<evidence type="ECO:0000250" key="1">
    <source>
        <dbReference type="UniProtKB" id="C4M1P9"/>
    </source>
</evidence>
<evidence type="ECO:0000250" key="2">
    <source>
        <dbReference type="UniProtKB" id="P24309"/>
    </source>
</evidence>
<evidence type="ECO:0000250" key="3">
    <source>
        <dbReference type="UniProtKB" id="Q923B1"/>
    </source>
</evidence>
<evidence type="ECO:0000256" key="4">
    <source>
        <dbReference type="SAM" id="MobiDB-lite"/>
    </source>
</evidence>
<evidence type="ECO:0000269" key="5">
    <source>
    </source>
</evidence>
<evidence type="ECO:0000269" key="6">
    <source>
    </source>
</evidence>
<evidence type="ECO:0000269" key="7">
    <source>
    </source>
</evidence>
<evidence type="ECO:0000269" key="8">
    <source>
    </source>
</evidence>
<evidence type="ECO:0000269" key="9">
    <source>
    </source>
</evidence>
<evidence type="ECO:0000303" key="10">
    <source>
    </source>
</evidence>
<evidence type="ECO:0000305" key="11"/>
<evidence type="ECO:0007744" key="12">
    <source>
    </source>
</evidence>
<evidence type="ECO:0007744" key="13">
    <source>
    </source>
</evidence>
<evidence type="ECO:0007744" key="14">
    <source>
    </source>
</evidence>
<evidence type="ECO:0007744" key="15">
    <source>
    </source>
</evidence>
<evidence type="ECO:0007744" key="16">
    <source>
    </source>
</evidence>
<evidence type="ECO:0007744" key="17">
    <source>
    </source>
</evidence>
<evidence type="ECO:0007744" key="18">
    <source>
    </source>
</evidence>
<proteinExistence type="evidence at protein level"/>
<feature type="chain" id="PRO_0000250358" description="Lariat debranching enzyme">
    <location>
        <begin position="1"/>
        <end position="544"/>
    </location>
</feature>
<feature type="region of interest" description="Lariat recognition loop" evidence="1">
    <location>
        <begin position="124"/>
        <end position="154"/>
    </location>
</feature>
<feature type="region of interest" description="Disordered" evidence="4">
    <location>
        <begin position="395"/>
        <end position="463"/>
    </location>
</feature>
<feature type="region of interest" description="Disordered" evidence="4">
    <location>
        <begin position="476"/>
        <end position="544"/>
    </location>
</feature>
<feature type="compositionally biased region" description="Acidic residues" evidence="4">
    <location>
        <begin position="395"/>
        <end position="412"/>
    </location>
</feature>
<feature type="compositionally biased region" description="Polar residues" evidence="4">
    <location>
        <begin position="413"/>
        <end position="425"/>
    </location>
</feature>
<feature type="compositionally biased region" description="Acidic residues" evidence="4">
    <location>
        <begin position="429"/>
        <end position="439"/>
    </location>
</feature>
<feature type="compositionally biased region" description="Polar residues" evidence="4">
    <location>
        <begin position="445"/>
        <end position="463"/>
    </location>
</feature>
<feature type="compositionally biased region" description="Basic and acidic residues" evidence="4">
    <location>
        <begin position="512"/>
        <end position="522"/>
    </location>
</feature>
<feature type="binding site" evidence="1">
    <location>
        <position position="8"/>
    </location>
    <ligand>
        <name>a divalent metal cation</name>
        <dbReference type="ChEBI" id="CHEBI:60240"/>
        <label>1</label>
    </ligand>
</feature>
<feature type="binding site" evidence="1">
    <location>
        <position position="10"/>
    </location>
    <ligand>
        <name>a divalent metal cation</name>
        <dbReference type="ChEBI" id="CHEBI:60240"/>
        <label>1</label>
    </ligand>
</feature>
<feature type="binding site" evidence="1">
    <location>
        <position position="39"/>
    </location>
    <ligand>
        <name>a divalent metal cation</name>
        <dbReference type="ChEBI" id="CHEBI:60240"/>
        <label>2</label>
    </ligand>
</feature>
<feature type="binding site" evidence="1">
    <location>
        <position position="84"/>
    </location>
    <ligand>
        <name>a divalent metal cation</name>
        <dbReference type="ChEBI" id="CHEBI:60240"/>
        <label>2</label>
    </ligand>
</feature>
<feature type="binding site" evidence="1">
    <location>
        <position position="174"/>
    </location>
    <ligand>
        <name>a divalent metal cation</name>
        <dbReference type="ChEBI" id="CHEBI:60240"/>
        <label>2</label>
    </ligand>
</feature>
<feature type="binding site" evidence="1">
    <location>
        <position position="226"/>
    </location>
    <ligand>
        <name>a divalent metal cation</name>
        <dbReference type="ChEBI" id="CHEBI:60240"/>
        <label>2</label>
    </ligand>
</feature>
<feature type="binding site" evidence="1">
    <location>
        <position position="228"/>
    </location>
    <ligand>
        <name>a divalent metal cation</name>
        <dbReference type="ChEBI" id="CHEBI:60240"/>
        <label>1</label>
    </ligand>
</feature>
<feature type="modified residue" description="N6-acetyllysine" evidence="14">
    <location>
        <position position="128"/>
    </location>
</feature>
<feature type="modified residue" description="Phosphoserine" evidence="18">
    <location>
        <position position="464"/>
    </location>
</feature>
<feature type="modified residue" description="Phosphoserine" evidence="13">
    <location>
        <position position="474"/>
    </location>
</feature>
<feature type="modified residue" description="Phosphoserine" evidence="13">
    <location>
        <position position="478"/>
    </location>
</feature>
<feature type="modified residue" description="Phosphoserine" evidence="13">
    <location>
        <position position="479"/>
    </location>
</feature>
<feature type="modified residue" description="Phosphoserine" evidence="3">
    <location>
        <position position="485"/>
    </location>
</feature>
<feature type="modified residue" description="Phosphoserine" evidence="3">
    <location>
        <position position="499"/>
    </location>
</feature>
<feature type="modified residue" description="Phosphoserine" evidence="12 15 16 17">
    <location>
        <position position="514"/>
    </location>
</feature>
<feature type="splice variant" id="VSP_020631" description="In isoform 2." evidence="10">
    <location>
        <begin position="1"/>
        <end position="232"/>
    </location>
</feature>
<feature type="splice variant" id="VSP_020632" description="In isoform 2." evidence="10">
    <original>ALMQH</original>
    <variation>MIHIV</variation>
    <location>
        <begin position="233"/>
        <end position="237"/>
    </location>
</feature>
<feature type="sequence variant" id="VAR_086073" description="In IIAE11; decreased protein abundance; decreased RNA lariat debranching enzyme activity; requires 2 nucleotide substitutions; dbSNP:rs2107907650." evidence="8">
    <original>L</original>
    <variation>G</variation>
    <location>
        <position position="13"/>
    </location>
</feature>
<feature type="sequence variant" id="VAR_086074" description="In IIAE11; decreased protein abundance; decreased RNA lariat debranching enzyme activity; dbSNP:rs2107907632." evidence="8">
    <original>Y</original>
    <variation>H</variation>
    <location>
        <position position="17"/>
    </location>
</feature>
<feature type="sequence variant" id="VAR_088992" description="In XGIP; likely pathogenic; results in decreased function in lariat intron processing and lariant accumulation in homozygous patient cells; severely reduced protein abundance in homozygous patient cells." evidence="9">
    <original>Y</original>
    <variation>C</variation>
    <location>
        <position position="67"/>
    </location>
</feature>
<feature type="sequence variant" id="VAR_086075" description="In IIAE11; decreased protein abundance; decreased RNA lariat debranching enzyme activity; dbSNP:rs2107906060." evidence="8">
    <original>I</original>
    <variation>T</variation>
    <location>
        <position position="120"/>
    </location>
</feature>
<feature type="sequence variant" id="VAR_086076" description="In IIAE11; loss of protein expression." evidence="8">
    <location>
        <begin position="197"/>
        <end position="544"/>
    </location>
</feature>
<feature type="mutagenesis site" description="No effect on protein abundance. Loss of RNA lariat debranching enzyme activity." evidence="8">
    <original>H</original>
    <variation>N</variation>
    <location>
        <position position="85"/>
    </location>
</feature>
<feature type="sequence conflict" description="In Ref. 2; BAA90954." evidence="11" ref="2">
    <original>N</original>
    <variation>S</variation>
    <location>
        <position position="308"/>
    </location>
</feature>
<feature type="sequence conflict" description="In Ref. 1; AAD53327." evidence="11" ref="1">
    <original>T</original>
    <variation>L</variation>
    <location>
        <position position="496"/>
    </location>
</feature>